<comment type="PTM">
    <text evidence="1">The N-terminus is cleaved by ribosomal processing cysteine protease Prp.</text>
</comment>
<comment type="similarity">
    <text evidence="2">Belongs to the bacterial ribosomal protein bL27 family.</text>
</comment>
<accession>B7HE75</accession>
<gene>
    <name evidence="2" type="primary">rpmA</name>
    <name type="ordered locus">BCB4264_A4560</name>
</gene>
<reference key="1">
    <citation type="submission" date="2008-10" db="EMBL/GenBank/DDBJ databases">
        <title>Genome sequence of Bacillus cereus B4264.</title>
        <authorList>
            <person name="Dodson R.J."/>
            <person name="Durkin A.S."/>
            <person name="Rosovitz M.J."/>
            <person name="Rasko D.A."/>
            <person name="Hoffmaster A."/>
            <person name="Ravel J."/>
            <person name="Sutton G."/>
        </authorList>
    </citation>
    <scope>NUCLEOTIDE SEQUENCE [LARGE SCALE GENOMIC DNA]</scope>
    <source>
        <strain>B4264</strain>
    </source>
</reference>
<organism>
    <name type="scientific">Bacillus cereus (strain B4264)</name>
    <dbReference type="NCBI Taxonomy" id="405532"/>
    <lineage>
        <taxon>Bacteria</taxon>
        <taxon>Bacillati</taxon>
        <taxon>Bacillota</taxon>
        <taxon>Bacilli</taxon>
        <taxon>Bacillales</taxon>
        <taxon>Bacillaceae</taxon>
        <taxon>Bacillus</taxon>
        <taxon>Bacillus cereus group</taxon>
    </lineage>
</organism>
<keyword id="KW-0687">Ribonucleoprotein</keyword>
<keyword id="KW-0689">Ribosomal protein</keyword>
<feature type="propeptide" id="PRO_0000459855" evidence="1">
    <location>
        <begin position="1"/>
        <end position="9"/>
    </location>
</feature>
<feature type="chain" id="PRO_1000128693" description="Large ribosomal subunit protein bL27">
    <location>
        <begin position="10"/>
        <end position="96"/>
    </location>
</feature>
<feature type="region of interest" description="Disordered" evidence="3">
    <location>
        <begin position="13"/>
        <end position="35"/>
    </location>
</feature>
<evidence type="ECO:0000250" key="1">
    <source>
        <dbReference type="UniProtKB" id="Q2FXT0"/>
    </source>
</evidence>
<evidence type="ECO:0000255" key="2">
    <source>
        <dbReference type="HAMAP-Rule" id="MF_00539"/>
    </source>
</evidence>
<evidence type="ECO:0000256" key="3">
    <source>
        <dbReference type="SAM" id="MobiDB-lite"/>
    </source>
</evidence>
<evidence type="ECO:0000305" key="4"/>
<protein>
    <recommendedName>
        <fullName evidence="2">Large ribosomal subunit protein bL27</fullName>
    </recommendedName>
    <alternativeName>
        <fullName evidence="4">50S ribosomal protein L27</fullName>
    </alternativeName>
</protein>
<sequence>MLRLDLQFFASKKGVGSTKNGRDSQSKRLGAKRADGQTVTGGSILYRQRGTKIYPGVNVGRGGDDTLYAKVDGVVRFERLGRDRKQVSVYPVAQEA</sequence>
<dbReference type="EMBL" id="CP001176">
    <property type="protein sequence ID" value="ACK60505.1"/>
    <property type="molecule type" value="Genomic_DNA"/>
</dbReference>
<dbReference type="RefSeq" id="WP_000944958.1">
    <property type="nucleotide sequence ID" value="NZ_VEHB01000006.1"/>
</dbReference>
<dbReference type="SMR" id="B7HE75"/>
<dbReference type="GeneID" id="93006658"/>
<dbReference type="KEGG" id="bcb:BCB4264_A4560"/>
<dbReference type="HOGENOM" id="CLU_095424_4_0_9"/>
<dbReference type="Proteomes" id="UP000007096">
    <property type="component" value="Chromosome"/>
</dbReference>
<dbReference type="GO" id="GO:0022625">
    <property type="term" value="C:cytosolic large ribosomal subunit"/>
    <property type="evidence" value="ECO:0007669"/>
    <property type="project" value="TreeGrafter"/>
</dbReference>
<dbReference type="GO" id="GO:0003735">
    <property type="term" value="F:structural constituent of ribosome"/>
    <property type="evidence" value="ECO:0007669"/>
    <property type="project" value="InterPro"/>
</dbReference>
<dbReference type="GO" id="GO:0006412">
    <property type="term" value="P:translation"/>
    <property type="evidence" value="ECO:0007669"/>
    <property type="project" value="UniProtKB-UniRule"/>
</dbReference>
<dbReference type="FunFam" id="2.40.50.100:FF:000004">
    <property type="entry name" value="50S ribosomal protein L27"/>
    <property type="match status" value="1"/>
</dbReference>
<dbReference type="Gene3D" id="2.40.50.100">
    <property type="match status" value="1"/>
</dbReference>
<dbReference type="HAMAP" id="MF_00539">
    <property type="entry name" value="Ribosomal_bL27"/>
    <property type="match status" value="1"/>
</dbReference>
<dbReference type="InterPro" id="IPR001684">
    <property type="entry name" value="Ribosomal_bL27"/>
</dbReference>
<dbReference type="InterPro" id="IPR018261">
    <property type="entry name" value="Ribosomal_bL27_CS"/>
</dbReference>
<dbReference type="NCBIfam" id="TIGR00062">
    <property type="entry name" value="L27"/>
    <property type="match status" value="1"/>
</dbReference>
<dbReference type="PANTHER" id="PTHR15893:SF0">
    <property type="entry name" value="LARGE RIBOSOMAL SUBUNIT PROTEIN BL27M"/>
    <property type="match status" value="1"/>
</dbReference>
<dbReference type="PANTHER" id="PTHR15893">
    <property type="entry name" value="RIBOSOMAL PROTEIN L27"/>
    <property type="match status" value="1"/>
</dbReference>
<dbReference type="Pfam" id="PF01016">
    <property type="entry name" value="Ribosomal_L27"/>
    <property type="match status" value="1"/>
</dbReference>
<dbReference type="PRINTS" id="PR00063">
    <property type="entry name" value="RIBOSOMALL27"/>
</dbReference>
<dbReference type="SUPFAM" id="SSF110324">
    <property type="entry name" value="Ribosomal L27 protein-like"/>
    <property type="match status" value="1"/>
</dbReference>
<dbReference type="PROSITE" id="PS00831">
    <property type="entry name" value="RIBOSOMAL_L27"/>
    <property type="match status" value="1"/>
</dbReference>
<proteinExistence type="inferred from homology"/>
<name>RL27_BACC4</name>